<accession>Q5R0M1</accession>
<evidence type="ECO:0000255" key="1">
    <source>
        <dbReference type="HAMAP-Rule" id="MF_00033"/>
    </source>
</evidence>
<comment type="function">
    <text evidence="1">Cell wall formation. Catalyzes the transfer of a GlcNAc subunit on undecaprenyl-pyrophosphoryl-MurNAc-pentapeptide (lipid intermediate I) to form undecaprenyl-pyrophosphoryl-MurNAc-(pentapeptide)GlcNAc (lipid intermediate II).</text>
</comment>
<comment type="catalytic activity">
    <reaction evidence="1">
        <text>di-trans,octa-cis-undecaprenyl diphospho-N-acetyl-alpha-D-muramoyl-L-alanyl-D-glutamyl-meso-2,6-diaminopimeloyl-D-alanyl-D-alanine + UDP-N-acetyl-alpha-D-glucosamine = di-trans,octa-cis-undecaprenyl diphospho-[N-acetyl-alpha-D-glucosaminyl-(1-&gt;4)]-N-acetyl-alpha-D-muramoyl-L-alanyl-D-glutamyl-meso-2,6-diaminopimeloyl-D-alanyl-D-alanine + UDP + H(+)</text>
        <dbReference type="Rhea" id="RHEA:31227"/>
        <dbReference type="ChEBI" id="CHEBI:15378"/>
        <dbReference type="ChEBI" id="CHEBI:57705"/>
        <dbReference type="ChEBI" id="CHEBI:58223"/>
        <dbReference type="ChEBI" id="CHEBI:61387"/>
        <dbReference type="ChEBI" id="CHEBI:61388"/>
        <dbReference type="EC" id="2.4.1.227"/>
    </reaction>
</comment>
<comment type="pathway">
    <text evidence="1">Cell wall biogenesis; peptidoglycan biosynthesis.</text>
</comment>
<comment type="subcellular location">
    <subcellularLocation>
        <location evidence="1">Cell inner membrane</location>
        <topology evidence="1">Peripheral membrane protein</topology>
        <orientation evidence="1">Cytoplasmic side</orientation>
    </subcellularLocation>
</comment>
<comment type="similarity">
    <text evidence="1">Belongs to the glycosyltransferase 28 family. MurG subfamily.</text>
</comment>
<protein>
    <recommendedName>
        <fullName evidence="1">UDP-N-acetylglucosamine--N-acetylmuramyl-(pentapeptide) pyrophosphoryl-undecaprenol N-acetylglucosamine transferase</fullName>
        <ecNumber evidence="1">2.4.1.227</ecNumber>
    </recommendedName>
    <alternativeName>
        <fullName evidence="1">Undecaprenyl-PP-MurNAc-pentapeptide-UDPGlcNAc GlcNAc transferase</fullName>
    </alternativeName>
</protein>
<sequence length="362" mass="39064">MNKVLIAAAGTGGHIFPALAVAEQMRDNGWQVDWLGTQEGRLESRVIPAANFPLHSISMTGVRGHGLKRKLFMPFTLAKAVLQCRRLLKTLQPQVVATFGGYVCAPMGLAAKLLGIPLVVHEQNAIPGMTTRLLAPRANKVMLGLPVALPQWQQYPVVGNPLRKGLLAQAAEQTEKSNTDGALNILVVGGSLGAQVLNEAVPEAVKALEGVELNVLHQCGAEREATTEKAYLGASVLKTLKVTEFIEDMGDAFKNADLVICRAGALTISELAVMGVASILVPLPHAVDDHQSANAKVLESRGAAVLLPQTEVVEGALKQQLKRLLHDRQQLWTMARFARQCAMPEATQRLVNECMEYRQSDD</sequence>
<dbReference type="EC" id="2.4.1.227" evidence="1"/>
<dbReference type="EMBL" id="AE017340">
    <property type="protein sequence ID" value="AAV81279.1"/>
    <property type="molecule type" value="Genomic_DNA"/>
</dbReference>
<dbReference type="RefSeq" id="WP_011233697.1">
    <property type="nucleotide sequence ID" value="NC_006512.1"/>
</dbReference>
<dbReference type="SMR" id="Q5R0M1"/>
<dbReference type="STRING" id="283942.IL0436"/>
<dbReference type="CAZy" id="GT28">
    <property type="family name" value="Glycosyltransferase Family 28"/>
</dbReference>
<dbReference type="GeneID" id="41335588"/>
<dbReference type="KEGG" id="ilo:IL0436"/>
<dbReference type="eggNOG" id="COG0707">
    <property type="taxonomic scope" value="Bacteria"/>
</dbReference>
<dbReference type="HOGENOM" id="CLU_037404_2_0_6"/>
<dbReference type="OrthoDB" id="9808936at2"/>
<dbReference type="UniPathway" id="UPA00219"/>
<dbReference type="Proteomes" id="UP000001171">
    <property type="component" value="Chromosome"/>
</dbReference>
<dbReference type="GO" id="GO:0005886">
    <property type="term" value="C:plasma membrane"/>
    <property type="evidence" value="ECO:0007669"/>
    <property type="project" value="UniProtKB-SubCell"/>
</dbReference>
<dbReference type="GO" id="GO:0051991">
    <property type="term" value="F:UDP-N-acetyl-D-glucosamine:N-acetylmuramoyl-L-alanyl-D-glutamyl-meso-2,6-diaminopimelyl-D-alanyl-D-alanine-diphosphoundecaprenol 4-beta-N-acetylglucosaminlytransferase activity"/>
    <property type="evidence" value="ECO:0007669"/>
    <property type="project" value="RHEA"/>
</dbReference>
<dbReference type="GO" id="GO:0050511">
    <property type="term" value="F:undecaprenyldiphospho-muramoylpentapeptide beta-N-acetylglucosaminyltransferase activity"/>
    <property type="evidence" value="ECO:0007669"/>
    <property type="project" value="UniProtKB-UniRule"/>
</dbReference>
<dbReference type="GO" id="GO:0005975">
    <property type="term" value="P:carbohydrate metabolic process"/>
    <property type="evidence" value="ECO:0007669"/>
    <property type="project" value="InterPro"/>
</dbReference>
<dbReference type="GO" id="GO:0051301">
    <property type="term" value="P:cell division"/>
    <property type="evidence" value="ECO:0007669"/>
    <property type="project" value="UniProtKB-KW"/>
</dbReference>
<dbReference type="GO" id="GO:0071555">
    <property type="term" value="P:cell wall organization"/>
    <property type="evidence" value="ECO:0007669"/>
    <property type="project" value="UniProtKB-KW"/>
</dbReference>
<dbReference type="GO" id="GO:0030259">
    <property type="term" value="P:lipid glycosylation"/>
    <property type="evidence" value="ECO:0007669"/>
    <property type="project" value="UniProtKB-UniRule"/>
</dbReference>
<dbReference type="GO" id="GO:0009252">
    <property type="term" value="P:peptidoglycan biosynthetic process"/>
    <property type="evidence" value="ECO:0007669"/>
    <property type="project" value="UniProtKB-UniRule"/>
</dbReference>
<dbReference type="GO" id="GO:0008360">
    <property type="term" value="P:regulation of cell shape"/>
    <property type="evidence" value="ECO:0007669"/>
    <property type="project" value="UniProtKB-KW"/>
</dbReference>
<dbReference type="CDD" id="cd03785">
    <property type="entry name" value="GT28_MurG"/>
    <property type="match status" value="1"/>
</dbReference>
<dbReference type="Gene3D" id="3.40.50.2000">
    <property type="entry name" value="Glycogen Phosphorylase B"/>
    <property type="match status" value="2"/>
</dbReference>
<dbReference type="HAMAP" id="MF_00033">
    <property type="entry name" value="MurG"/>
    <property type="match status" value="1"/>
</dbReference>
<dbReference type="InterPro" id="IPR006009">
    <property type="entry name" value="GlcNAc_MurG"/>
</dbReference>
<dbReference type="InterPro" id="IPR007235">
    <property type="entry name" value="Glyco_trans_28_C"/>
</dbReference>
<dbReference type="InterPro" id="IPR004276">
    <property type="entry name" value="GlycoTrans_28_N"/>
</dbReference>
<dbReference type="NCBIfam" id="TIGR01133">
    <property type="entry name" value="murG"/>
    <property type="match status" value="1"/>
</dbReference>
<dbReference type="PANTHER" id="PTHR21015:SF22">
    <property type="entry name" value="GLYCOSYLTRANSFERASE"/>
    <property type="match status" value="1"/>
</dbReference>
<dbReference type="PANTHER" id="PTHR21015">
    <property type="entry name" value="UDP-N-ACETYLGLUCOSAMINE--N-ACETYLMURAMYL-(PENTAPEPTIDE) PYROPHOSPHORYL-UNDECAPRENOL N-ACETYLGLUCOSAMINE TRANSFERASE 1"/>
    <property type="match status" value="1"/>
</dbReference>
<dbReference type="Pfam" id="PF04101">
    <property type="entry name" value="Glyco_tran_28_C"/>
    <property type="match status" value="1"/>
</dbReference>
<dbReference type="Pfam" id="PF03033">
    <property type="entry name" value="Glyco_transf_28"/>
    <property type="match status" value="1"/>
</dbReference>
<dbReference type="SUPFAM" id="SSF53756">
    <property type="entry name" value="UDP-Glycosyltransferase/glycogen phosphorylase"/>
    <property type="match status" value="1"/>
</dbReference>
<feature type="chain" id="PRO_0000225059" description="UDP-N-acetylglucosamine--N-acetylmuramyl-(pentapeptide) pyrophosphoryl-undecaprenol N-acetylglucosamine transferase">
    <location>
        <begin position="1"/>
        <end position="362"/>
    </location>
</feature>
<feature type="binding site" evidence="1">
    <location>
        <begin position="11"/>
        <end position="13"/>
    </location>
    <ligand>
        <name>UDP-N-acetyl-alpha-D-glucosamine</name>
        <dbReference type="ChEBI" id="CHEBI:57705"/>
    </ligand>
</feature>
<feature type="binding site" evidence="1">
    <location>
        <position position="124"/>
    </location>
    <ligand>
        <name>UDP-N-acetyl-alpha-D-glucosamine</name>
        <dbReference type="ChEBI" id="CHEBI:57705"/>
    </ligand>
</feature>
<feature type="binding site" evidence="1">
    <location>
        <position position="163"/>
    </location>
    <ligand>
        <name>UDP-N-acetyl-alpha-D-glucosamine</name>
        <dbReference type="ChEBI" id="CHEBI:57705"/>
    </ligand>
</feature>
<feature type="binding site" evidence="1">
    <location>
        <position position="191"/>
    </location>
    <ligand>
        <name>UDP-N-acetyl-alpha-D-glucosamine</name>
        <dbReference type="ChEBI" id="CHEBI:57705"/>
    </ligand>
</feature>
<feature type="binding site" evidence="1">
    <location>
        <position position="246"/>
    </location>
    <ligand>
        <name>UDP-N-acetyl-alpha-D-glucosamine</name>
        <dbReference type="ChEBI" id="CHEBI:57705"/>
    </ligand>
</feature>
<feature type="binding site" evidence="1">
    <location>
        <position position="291"/>
    </location>
    <ligand>
        <name>UDP-N-acetyl-alpha-D-glucosamine</name>
        <dbReference type="ChEBI" id="CHEBI:57705"/>
    </ligand>
</feature>
<proteinExistence type="inferred from homology"/>
<reference key="1">
    <citation type="journal article" date="2004" name="Proc. Natl. Acad. Sci. U.S.A.">
        <title>Genome sequence of the deep-sea gamma-proteobacterium Idiomarina loihiensis reveals amino acid fermentation as a source of carbon and energy.</title>
        <authorList>
            <person name="Hou S."/>
            <person name="Saw J.H."/>
            <person name="Lee K.S."/>
            <person name="Freitas T.A."/>
            <person name="Belisle C."/>
            <person name="Kawarabayasi Y."/>
            <person name="Donachie S.P."/>
            <person name="Pikina A."/>
            <person name="Galperin M.Y."/>
            <person name="Koonin E.V."/>
            <person name="Makarova K.S."/>
            <person name="Omelchenko M.V."/>
            <person name="Sorokin A."/>
            <person name="Wolf Y.I."/>
            <person name="Li Q.X."/>
            <person name="Keum Y.S."/>
            <person name="Campbell S."/>
            <person name="Denery J."/>
            <person name="Aizawa S."/>
            <person name="Shibata S."/>
            <person name="Malahoff A."/>
            <person name="Alam M."/>
        </authorList>
    </citation>
    <scope>NUCLEOTIDE SEQUENCE [LARGE SCALE GENOMIC DNA]</scope>
    <source>
        <strain>ATCC BAA-735 / DSM 15497 / L2-TR</strain>
    </source>
</reference>
<keyword id="KW-0131">Cell cycle</keyword>
<keyword id="KW-0132">Cell division</keyword>
<keyword id="KW-0997">Cell inner membrane</keyword>
<keyword id="KW-1003">Cell membrane</keyword>
<keyword id="KW-0133">Cell shape</keyword>
<keyword id="KW-0961">Cell wall biogenesis/degradation</keyword>
<keyword id="KW-0328">Glycosyltransferase</keyword>
<keyword id="KW-0472">Membrane</keyword>
<keyword id="KW-0573">Peptidoglycan synthesis</keyword>
<keyword id="KW-1185">Reference proteome</keyword>
<keyword id="KW-0808">Transferase</keyword>
<organism>
    <name type="scientific">Idiomarina loihiensis (strain ATCC BAA-735 / DSM 15497 / L2-TR)</name>
    <dbReference type="NCBI Taxonomy" id="283942"/>
    <lineage>
        <taxon>Bacteria</taxon>
        <taxon>Pseudomonadati</taxon>
        <taxon>Pseudomonadota</taxon>
        <taxon>Gammaproteobacteria</taxon>
        <taxon>Alteromonadales</taxon>
        <taxon>Idiomarinaceae</taxon>
        <taxon>Idiomarina</taxon>
    </lineage>
</organism>
<gene>
    <name evidence="1" type="primary">murG</name>
    <name type="ordered locus">IL0436</name>
</gene>
<name>MURG_IDILO</name>